<proteinExistence type="inferred from homology"/>
<name>ISPF_LACE2</name>
<gene>
    <name evidence="1" type="primary">ispF</name>
    <name type="ordered locus">EUBELI_00488</name>
</gene>
<dbReference type="EC" id="4.6.1.12" evidence="1"/>
<dbReference type="EMBL" id="CP001104">
    <property type="protein sequence ID" value="ACR71502.1"/>
    <property type="molecule type" value="Genomic_DNA"/>
</dbReference>
<dbReference type="RefSeq" id="WP_012738738.1">
    <property type="nucleotide sequence ID" value="NC_012778.1"/>
</dbReference>
<dbReference type="SMR" id="C4Z3N3"/>
<dbReference type="STRING" id="515620.EUBELI_00488"/>
<dbReference type="GeneID" id="41355250"/>
<dbReference type="KEGG" id="eel:EUBELI_00488"/>
<dbReference type="eggNOG" id="COG0245">
    <property type="taxonomic scope" value="Bacteria"/>
</dbReference>
<dbReference type="HOGENOM" id="CLU_084630_2_0_9"/>
<dbReference type="UniPathway" id="UPA00056">
    <property type="reaction ID" value="UER00095"/>
</dbReference>
<dbReference type="Proteomes" id="UP000001476">
    <property type="component" value="Chromosome"/>
</dbReference>
<dbReference type="GO" id="GO:0008685">
    <property type="term" value="F:2-C-methyl-D-erythritol 2,4-cyclodiphosphate synthase activity"/>
    <property type="evidence" value="ECO:0007669"/>
    <property type="project" value="UniProtKB-UniRule"/>
</dbReference>
<dbReference type="GO" id="GO:0046872">
    <property type="term" value="F:metal ion binding"/>
    <property type="evidence" value="ECO:0007669"/>
    <property type="project" value="UniProtKB-KW"/>
</dbReference>
<dbReference type="GO" id="GO:0019288">
    <property type="term" value="P:isopentenyl diphosphate biosynthetic process, methylerythritol 4-phosphate pathway"/>
    <property type="evidence" value="ECO:0007669"/>
    <property type="project" value="UniProtKB-UniRule"/>
</dbReference>
<dbReference type="GO" id="GO:0016114">
    <property type="term" value="P:terpenoid biosynthetic process"/>
    <property type="evidence" value="ECO:0007669"/>
    <property type="project" value="InterPro"/>
</dbReference>
<dbReference type="CDD" id="cd00554">
    <property type="entry name" value="MECDP_synthase"/>
    <property type="match status" value="1"/>
</dbReference>
<dbReference type="FunFam" id="3.30.1330.50:FF:000001">
    <property type="entry name" value="2-C-methyl-D-erythritol 2,4-cyclodiphosphate synthase"/>
    <property type="match status" value="1"/>
</dbReference>
<dbReference type="Gene3D" id="3.30.1330.50">
    <property type="entry name" value="2-C-methyl-D-erythritol 2,4-cyclodiphosphate synthase"/>
    <property type="match status" value="1"/>
</dbReference>
<dbReference type="HAMAP" id="MF_00107">
    <property type="entry name" value="IspF"/>
    <property type="match status" value="1"/>
</dbReference>
<dbReference type="InterPro" id="IPR003526">
    <property type="entry name" value="MECDP_synthase"/>
</dbReference>
<dbReference type="InterPro" id="IPR020555">
    <property type="entry name" value="MECDP_synthase_CS"/>
</dbReference>
<dbReference type="InterPro" id="IPR036571">
    <property type="entry name" value="MECDP_synthase_sf"/>
</dbReference>
<dbReference type="NCBIfam" id="TIGR00151">
    <property type="entry name" value="ispF"/>
    <property type="match status" value="1"/>
</dbReference>
<dbReference type="PANTHER" id="PTHR43181">
    <property type="entry name" value="2-C-METHYL-D-ERYTHRITOL 2,4-CYCLODIPHOSPHATE SYNTHASE, CHLOROPLASTIC"/>
    <property type="match status" value="1"/>
</dbReference>
<dbReference type="PANTHER" id="PTHR43181:SF1">
    <property type="entry name" value="2-C-METHYL-D-ERYTHRITOL 2,4-CYCLODIPHOSPHATE SYNTHASE, CHLOROPLASTIC"/>
    <property type="match status" value="1"/>
</dbReference>
<dbReference type="Pfam" id="PF02542">
    <property type="entry name" value="YgbB"/>
    <property type="match status" value="1"/>
</dbReference>
<dbReference type="SUPFAM" id="SSF69765">
    <property type="entry name" value="IpsF-like"/>
    <property type="match status" value="1"/>
</dbReference>
<dbReference type="PROSITE" id="PS01350">
    <property type="entry name" value="ISPF"/>
    <property type="match status" value="1"/>
</dbReference>
<feature type="chain" id="PRO_1000202877" description="2-C-methyl-D-erythritol 2,4-cyclodiphosphate synthase">
    <location>
        <begin position="1"/>
        <end position="183"/>
    </location>
</feature>
<feature type="binding site" evidence="1">
    <location>
        <begin position="8"/>
        <end position="10"/>
    </location>
    <ligand>
        <name>4-CDP-2-C-methyl-D-erythritol 2-phosphate</name>
        <dbReference type="ChEBI" id="CHEBI:57919"/>
    </ligand>
</feature>
<feature type="binding site" evidence="1">
    <location>
        <position position="8"/>
    </location>
    <ligand>
        <name>a divalent metal cation</name>
        <dbReference type="ChEBI" id="CHEBI:60240"/>
    </ligand>
</feature>
<feature type="binding site" evidence="1">
    <location>
        <position position="10"/>
    </location>
    <ligand>
        <name>a divalent metal cation</name>
        <dbReference type="ChEBI" id="CHEBI:60240"/>
    </ligand>
</feature>
<feature type="binding site" evidence="1">
    <location>
        <begin position="34"/>
        <end position="35"/>
    </location>
    <ligand>
        <name>4-CDP-2-C-methyl-D-erythritol 2-phosphate</name>
        <dbReference type="ChEBI" id="CHEBI:57919"/>
    </ligand>
</feature>
<feature type="binding site" evidence="1">
    <location>
        <position position="42"/>
    </location>
    <ligand>
        <name>a divalent metal cation</name>
        <dbReference type="ChEBI" id="CHEBI:60240"/>
    </ligand>
</feature>
<feature type="binding site" evidence="1">
    <location>
        <begin position="56"/>
        <end position="58"/>
    </location>
    <ligand>
        <name>4-CDP-2-C-methyl-D-erythritol 2-phosphate</name>
        <dbReference type="ChEBI" id="CHEBI:57919"/>
    </ligand>
</feature>
<feature type="binding site" evidence="1">
    <location>
        <begin position="61"/>
        <end position="65"/>
    </location>
    <ligand>
        <name>4-CDP-2-C-methyl-D-erythritol 2-phosphate</name>
        <dbReference type="ChEBI" id="CHEBI:57919"/>
    </ligand>
</feature>
<feature type="binding site" evidence="1">
    <location>
        <begin position="132"/>
        <end position="135"/>
    </location>
    <ligand>
        <name>4-CDP-2-C-methyl-D-erythritol 2-phosphate</name>
        <dbReference type="ChEBI" id="CHEBI:57919"/>
    </ligand>
</feature>
<feature type="binding site" evidence="1">
    <location>
        <position position="139"/>
    </location>
    <ligand>
        <name>4-CDP-2-C-methyl-D-erythritol 2-phosphate</name>
        <dbReference type="ChEBI" id="CHEBI:57919"/>
    </ligand>
</feature>
<feature type="site" description="Transition state stabilizer" evidence="1">
    <location>
        <position position="34"/>
    </location>
</feature>
<feature type="site" description="Transition state stabilizer" evidence="1">
    <location>
        <position position="133"/>
    </location>
</feature>
<keyword id="KW-0414">Isoprene biosynthesis</keyword>
<keyword id="KW-0456">Lyase</keyword>
<keyword id="KW-0479">Metal-binding</keyword>
<keyword id="KW-1185">Reference proteome</keyword>
<reference key="1">
    <citation type="journal article" date="2009" name="Proc. Natl. Acad. Sci. U.S.A.">
        <title>Characterizing a model human gut microbiota composed of members of its two dominant bacterial phyla.</title>
        <authorList>
            <person name="Mahowald M.A."/>
            <person name="Rey F.E."/>
            <person name="Seedorf H."/>
            <person name="Turnbaugh P.J."/>
            <person name="Fulton R.S."/>
            <person name="Wollam A."/>
            <person name="Shah N."/>
            <person name="Wang C."/>
            <person name="Magrini V."/>
            <person name="Wilson R.K."/>
            <person name="Cantarel B.L."/>
            <person name="Coutinho P.M."/>
            <person name="Henrissat B."/>
            <person name="Crock L.W."/>
            <person name="Russell A."/>
            <person name="Verberkmoes N.C."/>
            <person name="Hettich R.L."/>
            <person name="Gordon J.I."/>
        </authorList>
    </citation>
    <scope>NUCLEOTIDE SEQUENCE [LARGE SCALE GENOMIC DNA]</scope>
    <source>
        <strain>ATCC 27750 / DSM 3376 / VPI C15-48 / C15-B4</strain>
    </source>
</reference>
<comment type="function">
    <text evidence="1">Involved in the biosynthesis of isopentenyl diphosphate (IPP) and dimethylallyl diphosphate (DMAPP), two major building blocks of isoprenoid compounds. Catalyzes the conversion of 4-diphosphocytidyl-2-C-methyl-D-erythritol 2-phosphate (CDP-ME2P) to 2-C-methyl-D-erythritol 2,4-cyclodiphosphate (ME-CPP) with a corresponding release of cytidine 5-monophosphate (CMP).</text>
</comment>
<comment type="catalytic activity">
    <reaction evidence="1">
        <text>4-CDP-2-C-methyl-D-erythritol 2-phosphate = 2-C-methyl-D-erythritol 2,4-cyclic diphosphate + CMP</text>
        <dbReference type="Rhea" id="RHEA:23864"/>
        <dbReference type="ChEBI" id="CHEBI:57919"/>
        <dbReference type="ChEBI" id="CHEBI:58483"/>
        <dbReference type="ChEBI" id="CHEBI:60377"/>
        <dbReference type="EC" id="4.6.1.12"/>
    </reaction>
</comment>
<comment type="cofactor">
    <cofactor evidence="1">
        <name>a divalent metal cation</name>
        <dbReference type="ChEBI" id="CHEBI:60240"/>
    </cofactor>
    <text evidence="1">Binds 1 divalent metal cation per subunit.</text>
</comment>
<comment type="pathway">
    <text evidence="1">Isoprenoid biosynthesis; isopentenyl diphosphate biosynthesis via DXP pathway; isopentenyl diphosphate from 1-deoxy-D-xylulose 5-phosphate: step 4/6.</text>
</comment>
<comment type="subunit">
    <text evidence="1">Homotrimer.</text>
</comment>
<comment type="similarity">
    <text evidence="1">Belongs to the IspF family.</text>
</comment>
<protein>
    <recommendedName>
        <fullName evidence="1">2-C-methyl-D-erythritol 2,4-cyclodiphosphate synthase</fullName>
        <shortName evidence="1">MECDP-synthase</shortName>
        <shortName evidence="1">MECPP-synthase</shortName>
        <shortName evidence="1">MECPS</shortName>
        <ecNumber evidence="1">4.6.1.12</ecNumber>
    </recommendedName>
</protein>
<sequence length="183" mass="19786">MRVGMGYDVHKLVKDRKLIMGGVEIPYELGLLGHSDADVLLHAIMDALLGAAALGDIGKHFPDTDDRYKGISSIKLLEEVGKKIDEANYIIENIDATIIAQKPKMRPYIDDMRKNIADALKIDVDRVNVKATTEEGLGFTGSGEGISSQAICSLNSVSNYIYGAADMTNCRSDCGGCMGCQNK</sequence>
<accession>C4Z3N3</accession>
<evidence type="ECO:0000255" key="1">
    <source>
        <dbReference type="HAMAP-Rule" id="MF_00107"/>
    </source>
</evidence>
<organism>
    <name type="scientific">Lachnospira eligens (strain ATCC 27750 / DSM 3376 / VPI C15-48 / C15-B4)</name>
    <name type="common">Eubacterium eligens</name>
    <dbReference type="NCBI Taxonomy" id="515620"/>
    <lineage>
        <taxon>Bacteria</taxon>
        <taxon>Bacillati</taxon>
        <taxon>Bacillota</taxon>
        <taxon>Clostridia</taxon>
        <taxon>Lachnospirales</taxon>
        <taxon>Lachnospiraceae</taxon>
        <taxon>Lachnospira</taxon>
    </lineage>
</organism>